<dbReference type="EMBL" id="CABT02000029">
    <property type="protein sequence ID" value="CCC12591.1"/>
    <property type="status" value="ALT_SEQ"/>
    <property type="molecule type" value="Genomic_DNA"/>
</dbReference>
<dbReference type="SMR" id="F7W503"/>
<dbReference type="STRING" id="771870.F7W503"/>
<dbReference type="VEuPathDB" id="FungiDB:SMAC_06998"/>
<dbReference type="eggNOG" id="KOG3439">
    <property type="taxonomic scope" value="Eukaryota"/>
</dbReference>
<dbReference type="HOGENOM" id="CLU_106795_1_1_1"/>
<dbReference type="InParanoid" id="F7W503"/>
<dbReference type="OrthoDB" id="10003551at2759"/>
<dbReference type="Proteomes" id="UP000001881">
    <property type="component" value="Unassembled WGS sequence"/>
</dbReference>
<dbReference type="GO" id="GO:0034274">
    <property type="term" value="C:Atg12-Atg5-Atg16 complex"/>
    <property type="evidence" value="ECO:0007669"/>
    <property type="project" value="TreeGrafter"/>
</dbReference>
<dbReference type="GO" id="GO:0000421">
    <property type="term" value="C:autophagosome membrane"/>
    <property type="evidence" value="ECO:0007669"/>
    <property type="project" value="TreeGrafter"/>
</dbReference>
<dbReference type="GO" id="GO:0034045">
    <property type="term" value="C:phagophore assembly site membrane"/>
    <property type="evidence" value="ECO:0007669"/>
    <property type="project" value="UniProtKB-SubCell"/>
</dbReference>
<dbReference type="GO" id="GO:0019776">
    <property type="term" value="F:Atg8-family ligase activity"/>
    <property type="evidence" value="ECO:0007669"/>
    <property type="project" value="TreeGrafter"/>
</dbReference>
<dbReference type="GO" id="GO:0000045">
    <property type="term" value="P:autophagosome assembly"/>
    <property type="evidence" value="ECO:0007669"/>
    <property type="project" value="InterPro"/>
</dbReference>
<dbReference type="GO" id="GO:0097352">
    <property type="term" value="P:autophagosome maturation"/>
    <property type="evidence" value="ECO:0007669"/>
    <property type="project" value="TreeGrafter"/>
</dbReference>
<dbReference type="GO" id="GO:0000422">
    <property type="term" value="P:autophagy of mitochondrion"/>
    <property type="evidence" value="ECO:0007669"/>
    <property type="project" value="TreeGrafter"/>
</dbReference>
<dbReference type="GO" id="GO:0061723">
    <property type="term" value="P:glycophagy"/>
    <property type="evidence" value="ECO:0007669"/>
    <property type="project" value="TreeGrafter"/>
</dbReference>
<dbReference type="GO" id="GO:0034727">
    <property type="term" value="P:piecemeal microautophagy of the nucleus"/>
    <property type="evidence" value="ECO:0007669"/>
    <property type="project" value="TreeGrafter"/>
</dbReference>
<dbReference type="GO" id="GO:0015031">
    <property type="term" value="P:protein transport"/>
    <property type="evidence" value="ECO:0007669"/>
    <property type="project" value="UniProtKB-KW"/>
</dbReference>
<dbReference type="CDD" id="cd01612">
    <property type="entry name" value="Ubl_ATG12"/>
    <property type="match status" value="1"/>
</dbReference>
<dbReference type="FunFam" id="3.10.20.90:FF:000148">
    <property type="entry name" value="Ubiquitin-like protein ATG12"/>
    <property type="match status" value="1"/>
</dbReference>
<dbReference type="Gene3D" id="3.10.20.90">
    <property type="entry name" value="Phosphatidylinositol 3-kinase Catalytic Subunit, Chain A, domain 1"/>
    <property type="match status" value="1"/>
</dbReference>
<dbReference type="InterPro" id="IPR007242">
    <property type="entry name" value="Atg12"/>
</dbReference>
<dbReference type="InterPro" id="IPR029071">
    <property type="entry name" value="Ubiquitin-like_domsf"/>
</dbReference>
<dbReference type="PANTHER" id="PTHR13385">
    <property type="entry name" value="AUTOPHAGY PROTEIN 12"/>
    <property type="match status" value="1"/>
</dbReference>
<dbReference type="PANTHER" id="PTHR13385:SF0">
    <property type="entry name" value="UBIQUITIN-LIKE PROTEIN ATG12"/>
    <property type="match status" value="1"/>
</dbReference>
<dbReference type="Pfam" id="PF04110">
    <property type="entry name" value="APG12"/>
    <property type="match status" value="1"/>
</dbReference>
<dbReference type="SUPFAM" id="SSF54236">
    <property type="entry name" value="Ubiquitin-like"/>
    <property type="match status" value="1"/>
</dbReference>
<feature type="chain" id="PRO_0000443906" description="Ubiquitin-like protein ATG12">
    <location>
        <begin position="1"/>
        <end position="159"/>
    </location>
</feature>
<feature type="region of interest" description="Disordered" evidence="2">
    <location>
        <begin position="1"/>
        <end position="40"/>
    </location>
</feature>
<feature type="compositionally biased region" description="Low complexity" evidence="2">
    <location>
        <begin position="13"/>
        <end position="27"/>
    </location>
</feature>
<feature type="cross-link" description="Glycyl lysine isopeptide (Gly-Lys) (interchain with K-218 in ATG5)" evidence="1">
    <location>
        <position position="159"/>
    </location>
</feature>
<accession>F7W503</accession>
<keyword id="KW-0072">Autophagy</keyword>
<keyword id="KW-0963">Cytoplasm</keyword>
<keyword id="KW-1017">Isopeptide bond</keyword>
<keyword id="KW-0472">Membrane</keyword>
<keyword id="KW-0653">Protein transport</keyword>
<keyword id="KW-1185">Reference proteome</keyword>
<keyword id="KW-0813">Transport</keyword>
<keyword id="KW-0833">Ubl conjugation pathway</keyword>
<organism>
    <name type="scientific">Sordaria macrospora (strain ATCC MYA-333 / DSM 997 / K(L3346) / K-hell)</name>
    <dbReference type="NCBI Taxonomy" id="771870"/>
    <lineage>
        <taxon>Eukaryota</taxon>
        <taxon>Fungi</taxon>
        <taxon>Dikarya</taxon>
        <taxon>Ascomycota</taxon>
        <taxon>Pezizomycotina</taxon>
        <taxon>Sordariomycetes</taxon>
        <taxon>Sordariomycetidae</taxon>
        <taxon>Sordariales</taxon>
        <taxon>Sordariaceae</taxon>
        <taxon>Sordaria</taxon>
    </lineage>
</organism>
<name>ATG12_SORMK</name>
<comment type="function">
    <text evidence="1 3">Ubiquitin-like protein involved in cytoplasm to vacuole transport (Cvt), autophagy vesicles formation, mitophagy, and nucleophagy (By similarity). Conjugation with ATG5 through a ubiquitin-like conjugating system involving also ATG7 as an E1-like activating enzyme and ATG10 as an E2-like conjugating enzyme, is essential for its function (By similarity). The ATG12-ATG5 conjugate acts as an E3-like enzyme which is required for lipidation of ATG8 and ATG8 association to the vesicle membranes (PubMed:27309377). ATG12-ATG5 rearranges the ATG3 catalytic center and enhances its E2 activity (By similarity). Plays a role in sexual development and perithecia formation (PubMed:27309377).</text>
</comment>
<comment type="subunit">
    <text evidence="1 3">Forms a conjugate with ATG5 (By similarity). Forms a thioester bond with the 'Cys-116' of ATG10 (By similarity). Interacts with the ATG7 C-terminal 40 amino acids domain (PubMed:27309377). The ATG12-ATG5 conjugate forms a complex with several units of ATG16 (By similarity). The ATG12-ATG5 conjugate also associates with ATG3 (PubMed:27309377).</text>
</comment>
<comment type="subcellular location">
    <subcellularLocation>
        <location evidence="3">Preautophagosomal structure membrane</location>
        <topology evidence="1">Peripheral membrane protein</topology>
    </subcellularLocation>
    <subcellularLocation>
        <location evidence="3">Cytoplasm</location>
    </subcellularLocation>
    <text evidence="1">Localizes to the isolation membrane (IM), a membrane sac which is generated from the pre-autophagosomal structure (PAS) (By similarity). Ultimately, the IM expands to become a mature autophagosome (By similarity). Also localizes to a dot at the junction between the IM and the vacuolar membrane, termed the vacuole-IM contact site (VICS) (By similarity).</text>
</comment>
<comment type="disruption phenotype">
    <text evidence="3">Displays slower vegetative growth under nutrient starvation conditions and leads to the inability to form fruiting bodies (PubMed:27309377).</text>
</comment>
<comment type="similarity">
    <text evidence="5">Belongs to the ATG12 family.</text>
</comment>
<comment type="sequence caution" evidence="6">
    <conflict type="erroneous gene model prediction">
        <sequence resource="EMBL-CDS" id="CCC12591"/>
    </conflict>
</comment>
<protein>
    <recommendedName>
        <fullName evidence="1">Ubiquitin-like protein ATG12</fullName>
    </recommendedName>
    <alternativeName>
        <fullName evidence="4">Autophagy-related protein 12</fullName>
    </alternativeName>
</protein>
<proteinExistence type="evidence at protein level"/>
<evidence type="ECO:0000250" key="1">
    <source>
        <dbReference type="UniProtKB" id="P38316"/>
    </source>
</evidence>
<evidence type="ECO:0000256" key="2">
    <source>
        <dbReference type="SAM" id="MobiDB-lite"/>
    </source>
</evidence>
<evidence type="ECO:0000269" key="3">
    <source>
    </source>
</evidence>
<evidence type="ECO:0000303" key="4">
    <source>
    </source>
</evidence>
<evidence type="ECO:0000305" key="5"/>
<evidence type="ECO:0000305" key="6">
    <source>
    </source>
</evidence>
<reference key="1">
    <citation type="journal article" date="2010" name="PLoS Genet.">
        <title>De novo assembly of a 40 Mb eukaryotic genome from short sequence reads: Sordaria macrospora, a model organism for fungal morphogenesis.</title>
        <authorList>
            <person name="Nowrousian M."/>
            <person name="Stajich J.E."/>
            <person name="Chu M."/>
            <person name="Engh I."/>
            <person name="Espagne E."/>
            <person name="Halliday K."/>
            <person name="Kamerewerd J."/>
            <person name="Kempken F."/>
            <person name="Knab B."/>
            <person name="Kuo H.-C."/>
            <person name="Osiewacz H.D."/>
            <person name="Poeggeler S."/>
            <person name="Read N.D."/>
            <person name="Seiler S."/>
            <person name="Smith K.M."/>
            <person name="Zickler D."/>
            <person name="Kueck U."/>
            <person name="Freitag M."/>
        </authorList>
    </citation>
    <scope>NUCLEOTIDE SEQUENCE [LARGE SCALE GENOMIC DNA]</scope>
    <source>
        <strain>ATCC MYA-333 / DSM 997 / K(L3346) / K-hell</strain>
    </source>
</reference>
<reference key="2">
    <citation type="journal article" date="2016" name="PLoS ONE">
        <title>Autophagy-Associated Protein SmATG12 Is Required for Fruiting-Body Formation in the Filamentous Ascomycete Sordaria macrospora.</title>
        <authorList>
            <person name="Werner A."/>
            <person name="Herzog B."/>
            <person name="Frey S."/>
            <person name="Poeggeler S."/>
        </authorList>
    </citation>
    <scope>FUNCTION</scope>
    <scope>DISRUPTION PHENOTYPE</scope>
    <scope>SUBCELLULAR LOCATION</scope>
    <scope>INTERACTION WITH ATG3 AND ATG7</scope>
</reference>
<gene>
    <name evidence="4" type="primary">ATG12</name>
    <name type="ORF">SMAC_06998</name>
</gene>
<sequence>MASPQPPFGGGSNSNSNTASPSNNLSPTASPLLEGRDSPNLPLTMTASTVLMTLPRDATAALAEAGKFGQEKVVIRFKPVGSAPALRREQVKVSSTERFDTVMTYIRKTLKCRESDSVFLYVNSVFAPALDEVVGNLWRCFKDSTNQLNVSYSMTPSFG</sequence>